<protein>
    <recommendedName>
        <fullName evidence="1">ATP synthase subunit beta</fullName>
        <ecNumber evidence="1">7.1.2.2</ecNumber>
    </recommendedName>
    <alternativeName>
        <fullName evidence="1">ATP synthase F1 sector subunit beta</fullName>
    </alternativeName>
    <alternativeName>
        <fullName evidence="1">F-ATPase subunit beta</fullName>
    </alternativeName>
</protein>
<name>ATPB_HAHCH</name>
<dbReference type="EC" id="7.1.2.2" evidence="1"/>
<dbReference type="EMBL" id="CP000155">
    <property type="protein sequence ID" value="ABC33683.1"/>
    <property type="molecule type" value="Genomic_DNA"/>
</dbReference>
<dbReference type="RefSeq" id="WP_011400733.1">
    <property type="nucleotide sequence ID" value="NC_007645.1"/>
</dbReference>
<dbReference type="SMR" id="Q2S6P1"/>
<dbReference type="STRING" id="349521.HCH_07071"/>
<dbReference type="KEGG" id="hch:HCH_07071"/>
<dbReference type="eggNOG" id="COG0055">
    <property type="taxonomic scope" value="Bacteria"/>
</dbReference>
<dbReference type="HOGENOM" id="CLU_022398_0_2_6"/>
<dbReference type="OrthoDB" id="9801639at2"/>
<dbReference type="Proteomes" id="UP000000238">
    <property type="component" value="Chromosome"/>
</dbReference>
<dbReference type="GO" id="GO:0005886">
    <property type="term" value="C:plasma membrane"/>
    <property type="evidence" value="ECO:0007669"/>
    <property type="project" value="UniProtKB-SubCell"/>
</dbReference>
<dbReference type="GO" id="GO:0045259">
    <property type="term" value="C:proton-transporting ATP synthase complex"/>
    <property type="evidence" value="ECO:0007669"/>
    <property type="project" value="UniProtKB-KW"/>
</dbReference>
<dbReference type="GO" id="GO:0005524">
    <property type="term" value="F:ATP binding"/>
    <property type="evidence" value="ECO:0007669"/>
    <property type="project" value="UniProtKB-UniRule"/>
</dbReference>
<dbReference type="GO" id="GO:0016887">
    <property type="term" value="F:ATP hydrolysis activity"/>
    <property type="evidence" value="ECO:0007669"/>
    <property type="project" value="InterPro"/>
</dbReference>
<dbReference type="GO" id="GO:0046933">
    <property type="term" value="F:proton-transporting ATP synthase activity, rotational mechanism"/>
    <property type="evidence" value="ECO:0007669"/>
    <property type="project" value="UniProtKB-UniRule"/>
</dbReference>
<dbReference type="CDD" id="cd18110">
    <property type="entry name" value="ATP-synt_F1_beta_C"/>
    <property type="match status" value="1"/>
</dbReference>
<dbReference type="CDD" id="cd18115">
    <property type="entry name" value="ATP-synt_F1_beta_N"/>
    <property type="match status" value="1"/>
</dbReference>
<dbReference type="CDD" id="cd01133">
    <property type="entry name" value="F1-ATPase_beta_CD"/>
    <property type="match status" value="1"/>
</dbReference>
<dbReference type="FunFam" id="1.10.1140.10:FF:000001">
    <property type="entry name" value="ATP synthase subunit beta"/>
    <property type="match status" value="1"/>
</dbReference>
<dbReference type="FunFam" id="2.40.10.170:FF:000003">
    <property type="entry name" value="ATP synthase subunit beta"/>
    <property type="match status" value="1"/>
</dbReference>
<dbReference type="FunFam" id="3.40.50.300:FF:000004">
    <property type="entry name" value="ATP synthase subunit beta"/>
    <property type="match status" value="1"/>
</dbReference>
<dbReference type="Gene3D" id="2.40.10.170">
    <property type="match status" value="1"/>
</dbReference>
<dbReference type="Gene3D" id="1.10.1140.10">
    <property type="entry name" value="Bovine Mitochondrial F1-atpase, Atp Synthase Beta Chain, Chain D, domain 3"/>
    <property type="match status" value="1"/>
</dbReference>
<dbReference type="Gene3D" id="3.40.50.300">
    <property type="entry name" value="P-loop containing nucleotide triphosphate hydrolases"/>
    <property type="match status" value="1"/>
</dbReference>
<dbReference type="HAMAP" id="MF_01347">
    <property type="entry name" value="ATP_synth_beta_bact"/>
    <property type="match status" value="1"/>
</dbReference>
<dbReference type="InterPro" id="IPR003593">
    <property type="entry name" value="AAA+_ATPase"/>
</dbReference>
<dbReference type="InterPro" id="IPR055190">
    <property type="entry name" value="ATP-synt_VA_C"/>
</dbReference>
<dbReference type="InterPro" id="IPR005722">
    <property type="entry name" value="ATP_synth_F1_bsu"/>
</dbReference>
<dbReference type="InterPro" id="IPR020003">
    <property type="entry name" value="ATPase_a/bsu_AS"/>
</dbReference>
<dbReference type="InterPro" id="IPR050053">
    <property type="entry name" value="ATPase_alpha/beta_chains"/>
</dbReference>
<dbReference type="InterPro" id="IPR004100">
    <property type="entry name" value="ATPase_F1/V1/A1_a/bsu_N"/>
</dbReference>
<dbReference type="InterPro" id="IPR036121">
    <property type="entry name" value="ATPase_F1/V1/A1_a/bsu_N_sf"/>
</dbReference>
<dbReference type="InterPro" id="IPR000194">
    <property type="entry name" value="ATPase_F1/V1/A1_a/bsu_nucl-bd"/>
</dbReference>
<dbReference type="InterPro" id="IPR024034">
    <property type="entry name" value="ATPase_F1/V1_b/a_C"/>
</dbReference>
<dbReference type="InterPro" id="IPR027417">
    <property type="entry name" value="P-loop_NTPase"/>
</dbReference>
<dbReference type="NCBIfam" id="TIGR01039">
    <property type="entry name" value="atpD"/>
    <property type="match status" value="1"/>
</dbReference>
<dbReference type="PANTHER" id="PTHR15184">
    <property type="entry name" value="ATP SYNTHASE"/>
    <property type="match status" value="1"/>
</dbReference>
<dbReference type="PANTHER" id="PTHR15184:SF71">
    <property type="entry name" value="ATP SYNTHASE SUBUNIT BETA, MITOCHONDRIAL"/>
    <property type="match status" value="1"/>
</dbReference>
<dbReference type="Pfam" id="PF00006">
    <property type="entry name" value="ATP-synt_ab"/>
    <property type="match status" value="1"/>
</dbReference>
<dbReference type="Pfam" id="PF02874">
    <property type="entry name" value="ATP-synt_ab_N"/>
    <property type="match status" value="1"/>
</dbReference>
<dbReference type="Pfam" id="PF22919">
    <property type="entry name" value="ATP-synt_VA_C"/>
    <property type="match status" value="1"/>
</dbReference>
<dbReference type="SMART" id="SM00382">
    <property type="entry name" value="AAA"/>
    <property type="match status" value="1"/>
</dbReference>
<dbReference type="SUPFAM" id="SSF47917">
    <property type="entry name" value="C-terminal domain of alpha and beta subunits of F1 ATP synthase"/>
    <property type="match status" value="1"/>
</dbReference>
<dbReference type="SUPFAM" id="SSF50615">
    <property type="entry name" value="N-terminal domain of alpha and beta subunits of F1 ATP synthase"/>
    <property type="match status" value="1"/>
</dbReference>
<dbReference type="SUPFAM" id="SSF52540">
    <property type="entry name" value="P-loop containing nucleoside triphosphate hydrolases"/>
    <property type="match status" value="1"/>
</dbReference>
<dbReference type="PROSITE" id="PS00152">
    <property type="entry name" value="ATPASE_ALPHA_BETA"/>
    <property type="match status" value="1"/>
</dbReference>
<feature type="chain" id="PRO_0000254273" description="ATP synthase subunit beta">
    <location>
        <begin position="1"/>
        <end position="459"/>
    </location>
</feature>
<feature type="binding site" evidence="1">
    <location>
        <begin position="148"/>
        <end position="155"/>
    </location>
    <ligand>
        <name>ATP</name>
        <dbReference type="ChEBI" id="CHEBI:30616"/>
    </ligand>
</feature>
<gene>
    <name evidence="1" type="primary">atpD</name>
    <name type="ordered locus">HCH_07071</name>
</gene>
<reference key="1">
    <citation type="journal article" date="2005" name="Nucleic Acids Res.">
        <title>Genomic blueprint of Hahella chejuensis, a marine microbe producing an algicidal agent.</title>
        <authorList>
            <person name="Jeong H."/>
            <person name="Yim J.H."/>
            <person name="Lee C."/>
            <person name="Choi S.-H."/>
            <person name="Park Y.K."/>
            <person name="Yoon S.H."/>
            <person name="Hur C.-G."/>
            <person name="Kang H.-Y."/>
            <person name="Kim D."/>
            <person name="Lee H.H."/>
            <person name="Park K.H."/>
            <person name="Park S.-H."/>
            <person name="Park H.-S."/>
            <person name="Lee H.K."/>
            <person name="Oh T.K."/>
            <person name="Kim J.F."/>
        </authorList>
    </citation>
    <scope>NUCLEOTIDE SEQUENCE [LARGE SCALE GENOMIC DNA]</scope>
    <source>
        <strain>KCTC 2396</strain>
    </source>
</reference>
<keyword id="KW-0066">ATP synthesis</keyword>
<keyword id="KW-0067">ATP-binding</keyword>
<keyword id="KW-0997">Cell inner membrane</keyword>
<keyword id="KW-1003">Cell membrane</keyword>
<keyword id="KW-0139">CF(1)</keyword>
<keyword id="KW-0375">Hydrogen ion transport</keyword>
<keyword id="KW-0406">Ion transport</keyword>
<keyword id="KW-0472">Membrane</keyword>
<keyword id="KW-0547">Nucleotide-binding</keyword>
<keyword id="KW-1185">Reference proteome</keyword>
<keyword id="KW-1278">Translocase</keyword>
<keyword id="KW-0813">Transport</keyword>
<comment type="function">
    <text evidence="1">Produces ATP from ADP in the presence of a proton gradient across the membrane. The catalytic sites are hosted primarily by the beta subunits.</text>
</comment>
<comment type="catalytic activity">
    <reaction evidence="1">
        <text>ATP + H2O + 4 H(+)(in) = ADP + phosphate + 5 H(+)(out)</text>
        <dbReference type="Rhea" id="RHEA:57720"/>
        <dbReference type="ChEBI" id="CHEBI:15377"/>
        <dbReference type="ChEBI" id="CHEBI:15378"/>
        <dbReference type="ChEBI" id="CHEBI:30616"/>
        <dbReference type="ChEBI" id="CHEBI:43474"/>
        <dbReference type="ChEBI" id="CHEBI:456216"/>
        <dbReference type="EC" id="7.1.2.2"/>
    </reaction>
</comment>
<comment type="subunit">
    <text evidence="1">F-type ATPases have 2 components, CF(1) - the catalytic core - and CF(0) - the membrane proton channel. CF(1) has five subunits: alpha(3), beta(3), gamma(1), delta(1), epsilon(1). CF(0) has three main subunits: a(1), b(2) and c(9-12). The alpha and beta chains form an alternating ring which encloses part of the gamma chain. CF(1) is attached to CF(0) by a central stalk formed by the gamma and epsilon chains, while a peripheral stalk is formed by the delta and b chains.</text>
</comment>
<comment type="subcellular location">
    <subcellularLocation>
        <location evidence="1">Cell inner membrane</location>
        <topology evidence="1">Peripheral membrane protein</topology>
    </subcellularLocation>
</comment>
<comment type="similarity">
    <text evidence="1">Belongs to the ATPase alpha/beta chains family.</text>
</comment>
<sequence length="459" mass="49912">MSSGQIVQIIGAVIDVEFPRDTVPKVYDALKVEGGATTLEVQQQLGDGIVRTIAMGSTEGLRRGLQVENTNAPISVPVGTQTLGRIMDVLGNPIDEKGPIGEEERMPIHRTAPGYADQSSSRDLLETGIKVIDLVCPFAKGGKVGLFGGAGVGKTVNMMELINNIAKEHSGLSVFAGVGERTREGNDFYYEMEESKVLDKVAMVYGQMNEPPGNRLRVALTGLTMAEKFRDEGRDVLLFVDNIYRYTLAGTEVSALLGRMPSAVGYQPTLAEEMGVLQERITSTKVGSITSVQAVYVPADDLTDPSPATTFSHLDATVVLSRDIAAKGIYPAIDPLDSTSRQLDPLVIGQEHYDVARGVQTVLQRYKELKDIIAILGMDELSEEDKQIVSRARKIERFLSQPFHVAEVFTGSPGKYVSLKDTIRGFKGILDGEFDHLPEQAFYMVGGIDEAVEKAKKTK</sequence>
<organism>
    <name type="scientific">Hahella chejuensis (strain KCTC 2396)</name>
    <dbReference type="NCBI Taxonomy" id="349521"/>
    <lineage>
        <taxon>Bacteria</taxon>
        <taxon>Pseudomonadati</taxon>
        <taxon>Pseudomonadota</taxon>
        <taxon>Gammaproteobacteria</taxon>
        <taxon>Oceanospirillales</taxon>
        <taxon>Hahellaceae</taxon>
        <taxon>Hahella</taxon>
    </lineage>
</organism>
<accession>Q2S6P1</accession>
<proteinExistence type="inferred from homology"/>
<evidence type="ECO:0000255" key="1">
    <source>
        <dbReference type="HAMAP-Rule" id="MF_01347"/>
    </source>
</evidence>